<reference key="1">
    <citation type="journal article" date="1999" name="J. Mol. Evol.">
        <title>The plastid genome of the cryptophyte alga, Guillardia theta: complete sequence and conserved synteny groups confirm its common ancestry with red algae.</title>
        <authorList>
            <person name="Douglas S.E."/>
            <person name="Penny S.L."/>
        </authorList>
    </citation>
    <scope>NUCLEOTIDE SEQUENCE [LARGE SCALE GENOMIC DNA]</scope>
</reference>
<comment type="function">
    <text evidence="1">Contributes to K(+)/H(+) antiport activity by supporting proton efflux to control proton extrusion and homeostasis in chloroplasts in a light-dependent manner to modulate photosynthesis. Prevents excessive induction of non-photochemical quenching (NPQ) under continuous-light conditions. Indirectly promotes efficient inorganic carbon uptake into chloroplasts.</text>
</comment>
<comment type="catalytic activity">
    <reaction evidence="1">
        <text>K(+)(in) + H(+)(out) = K(+)(out) + H(+)(in)</text>
        <dbReference type="Rhea" id="RHEA:29467"/>
        <dbReference type="ChEBI" id="CHEBI:15378"/>
        <dbReference type="ChEBI" id="CHEBI:29103"/>
    </reaction>
</comment>
<comment type="subcellular location">
    <subcellularLocation>
        <location evidence="1">Plastid</location>
        <location evidence="1">Chloroplast inner membrane</location>
        <topology evidence="1">Multi-pass membrane protein</topology>
    </subcellularLocation>
</comment>
<comment type="similarity">
    <text evidence="1 2">Belongs to the CemA family.</text>
</comment>
<dbReference type="EMBL" id="AF041468">
    <property type="protein sequence ID" value="AAC35661.1"/>
    <property type="molecule type" value="Genomic_DNA"/>
</dbReference>
<dbReference type="RefSeq" id="NP_050727.1">
    <property type="nucleotide sequence ID" value="NC_000926.1"/>
</dbReference>
<dbReference type="SMR" id="O78470"/>
<dbReference type="GeneID" id="857031"/>
<dbReference type="HOGENOM" id="CLU_1002709_0_0_1"/>
<dbReference type="OMA" id="ELEYYGD"/>
<dbReference type="GO" id="GO:0009706">
    <property type="term" value="C:chloroplast inner membrane"/>
    <property type="evidence" value="ECO:0007669"/>
    <property type="project" value="UniProtKB-SubCell"/>
</dbReference>
<dbReference type="GO" id="GO:0015297">
    <property type="term" value="F:antiporter activity"/>
    <property type="evidence" value="ECO:0007669"/>
    <property type="project" value="UniProtKB-KW"/>
</dbReference>
<dbReference type="GO" id="GO:0015078">
    <property type="term" value="F:proton transmembrane transporter activity"/>
    <property type="evidence" value="ECO:0007669"/>
    <property type="project" value="UniProtKB-UniRule"/>
</dbReference>
<dbReference type="GO" id="GO:0006813">
    <property type="term" value="P:potassium ion transport"/>
    <property type="evidence" value="ECO:0007669"/>
    <property type="project" value="UniProtKB-UniRule"/>
</dbReference>
<dbReference type="HAMAP" id="MF_01308">
    <property type="entry name" value="CemA_PxcA"/>
    <property type="match status" value="1"/>
</dbReference>
<dbReference type="InterPro" id="IPR004282">
    <property type="entry name" value="CemA"/>
</dbReference>
<dbReference type="PANTHER" id="PTHR33650:SF2">
    <property type="entry name" value="CHLOROPLAST ENVELOPE MEMBRANE PROTEIN"/>
    <property type="match status" value="1"/>
</dbReference>
<dbReference type="PANTHER" id="PTHR33650">
    <property type="entry name" value="CHLOROPLAST ENVELOPE MEMBRANE PROTEIN-RELATED"/>
    <property type="match status" value="1"/>
</dbReference>
<dbReference type="Pfam" id="PF03040">
    <property type="entry name" value="CemA"/>
    <property type="match status" value="1"/>
</dbReference>
<geneLocation type="chloroplast"/>
<protein>
    <recommendedName>
        <fullName evidence="1">Potassium/proton antiporter CemA</fullName>
    </recommendedName>
    <alternativeName>
        <fullName evidence="1">Chloroplast envelope membrane protein A</fullName>
        <shortName evidence="1">CemA</shortName>
    </alternativeName>
</protein>
<accession>O78470</accession>
<proteinExistence type="inferred from homology"/>
<gene>
    <name evidence="1" type="primary">cemA</name>
    <name type="synonym">ycf10</name>
</gene>
<feature type="chain" id="PRO_0000216643" description="Potassium/proton antiporter CemA">
    <location>
        <begin position="1"/>
        <end position="278"/>
    </location>
</feature>
<feature type="transmembrane region" description="Helical" evidence="1">
    <location>
        <begin position="60"/>
        <end position="80"/>
    </location>
</feature>
<feature type="transmembrane region" description="Helical" evidence="1">
    <location>
        <begin position="163"/>
        <end position="183"/>
    </location>
</feature>
<feature type="transmembrane region" description="Helical" evidence="1">
    <location>
        <begin position="201"/>
        <end position="221"/>
    </location>
</feature>
<feature type="transmembrane region" description="Helical" evidence="1">
    <location>
        <begin position="239"/>
        <end position="259"/>
    </location>
</feature>
<sequence length="278" mass="32209">MKNWRLNNVTESAFEKTGPIPRSIAKTFEKFKKELEPNSESEIIEEFRVSRYQTASSIKYLVLLVTVPLLINQASKSLVFSPFIDYFWNDNQSDIFLNESQEERAFSELQRFEEKIHFEILIGQSPPLSQETIDKEIKNKAIELAQFYVQESTDAIKNLLADILAFITFAYLIFTGGRQIAVLKSFINELIYGLSDTAKAFLIILFTDIFVGFHSTHGWEVVLENGLRHFGLPENRDLIFLFIATFPVVLDTVFKYWIFRYLNQVSPSAVATYHEMNE</sequence>
<name>CEMA_GUITH</name>
<organism>
    <name type="scientific">Guillardia theta</name>
    <name type="common">Cryptophyte</name>
    <name type="synonym">Cryptomonas phi</name>
    <dbReference type="NCBI Taxonomy" id="55529"/>
    <lineage>
        <taxon>Eukaryota</taxon>
        <taxon>Cryptophyceae</taxon>
        <taxon>Pyrenomonadales</taxon>
        <taxon>Geminigeraceae</taxon>
        <taxon>Guillardia</taxon>
    </lineage>
</organism>
<keyword id="KW-0050">Antiport</keyword>
<keyword id="KW-0150">Chloroplast</keyword>
<keyword id="KW-0375">Hydrogen ion transport</keyword>
<keyword id="KW-0406">Ion transport</keyword>
<keyword id="KW-0472">Membrane</keyword>
<keyword id="KW-0934">Plastid</keyword>
<keyword id="KW-1001">Plastid inner membrane</keyword>
<keyword id="KW-0630">Potassium</keyword>
<keyword id="KW-0633">Potassium transport</keyword>
<keyword id="KW-0812">Transmembrane</keyword>
<keyword id="KW-1133">Transmembrane helix</keyword>
<keyword id="KW-0813">Transport</keyword>
<evidence type="ECO:0000255" key="1">
    <source>
        <dbReference type="HAMAP-Rule" id="MF_01308"/>
    </source>
</evidence>
<evidence type="ECO:0000305" key="2"/>